<dbReference type="EMBL" id="CP000800">
    <property type="protein sequence ID" value="ABV17720.1"/>
    <property type="molecule type" value="Genomic_DNA"/>
</dbReference>
<dbReference type="RefSeq" id="WP_000678208.1">
    <property type="nucleotide sequence ID" value="NC_009801.1"/>
</dbReference>
<dbReference type="SMR" id="A7ZIN3"/>
<dbReference type="KEGG" id="ecw:EcE24377A_0511"/>
<dbReference type="HOGENOM" id="CLU_006684_3_0_6"/>
<dbReference type="Proteomes" id="UP000001122">
    <property type="component" value="Chromosome"/>
</dbReference>
<dbReference type="GO" id="GO:0005737">
    <property type="term" value="C:cytoplasm"/>
    <property type="evidence" value="ECO:0007669"/>
    <property type="project" value="UniProtKB-SubCell"/>
</dbReference>
<dbReference type="GO" id="GO:0005524">
    <property type="term" value="F:ATP binding"/>
    <property type="evidence" value="ECO:0007669"/>
    <property type="project" value="UniProtKB-UniRule"/>
</dbReference>
<dbReference type="GO" id="GO:0016887">
    <property type="term" value="F:ATP hydrolysis activity"/>
    <property type="evidence" value="ECO:0007669"/>
    <property type="project" value="InterPro"/>
</dbReference>
<dbReference type="GO" id="GO:0140662">
    <property type="term" value="F:ATP-dependent protein folding chaperone"/>
    <property type="evidence" value="ECO:0007669"/>
    <property type="project" value="InterPro"/>
</dbReference>
<dbReference type="GO" id="GO:0051082">
    <property type="term" value="F:unfolded protein binding"/>
    <property type="evidence" value="ECO:0007669"/>
    <property type="project" value="UniProtKB-UniRule"/>
</dbReference>
<dbReference type="CDD" id="cd16927">
    <property type="entry name" value="HATPase_Hsp90-like"/>
    <property type="match status" value="1"/>
</dbReference>
<dbReference type="FunFam" id="1.20.120.790:FF:000002">
    <property type="entry name" value="Molecular chaperone HtpG"/>
    <property type="match status" value="1"/>
</dbReference>
<dbReference type="FunFam" id="3.30.230.80:FF:000002">
    <property type="entry name" value="Molecular chaperone HtpG"/>
    <property type="match status" value="1"/>
</dbReference>
<dbReference type="FunFam" id="3.30.565.10:FF:000009">
    <property type="entry name" value="Molecular chaperone HtpG"/>
    <property type="match status" value="1"/>
</dbReference>
<dbReference type="FunFam" id="3.40.50.11260:FF:000002">
    <property type="entry name" value="Molecular chaperone HtpG"/>
    <property type="match status" value="1"/>
</dbReference>
<dbReference type="Gene3D" id="3.30.230.80">
    <property type="match status" value="1"/>
</dbReference>
<dbReference type="Gene3D" id="3.40.50.11260">
    <property type="match status" value="1"/>
</dbReference>
<dbReference type="Gene3D" id="1.20.120.790">
    <property type="entry name" value="Heat shock protein 90, C-terminal domain"/>
    <property type="match status" value="1"/>
</dbReference>
<dbReference type="Gene3D" id="3.30.565.10">
    <property type="entry name" value="Histidine kinase-like ATPase, C-terminal domain"/>
    <property type="match status" value="1"/>
</dbReference>
<dbReference type="HAMAP" id="MF_00505">
    <property type="entry name" value="HSP90"/>
    <property type="match status" value="1"/>
</dbReference>
<dbReference type="InterPro" id="IPR036890">
    <property type="entry name" value="HATPase_C_sf"/>
</dbReference>
<dbReference type="InterPro" id="IPR019805">
    <property type="entry name" value="Heat_shock_protein_90_CS"/>
</dbReference>
<dbReference type="InterPro" id="IPR037196">
    <property type="entry name" value="HSP90_C"/>
</dbReference>
<dbReference type="InterPro" id="IPR001404">
    <property type="entry name" value="Hsp90_fam"/>
</dbReference>
<dbReference type="InterPro" id="IPR020575">
    <property type="entry name" value="Hsp90_N"/>
</dbReference>
<dbReference type="InterPro" id="IPR020568">
    <property type="entry name" value="Ribosomal_Su5_D2-typ_SF"/>
</dbReference>
<dbReference type="NCBIfam" id="NF003555">
    <property type="entry name" value="PRK05218.1"/>
    <property type="match status" value="1"/>
</dbReference>
<dbReference type="PANTHER" id="PTHR11528">
    <property type="entry name" value="HEAT SHOCK PROTEIN 90 FAMILY MEMBER"/>
    <property type="match status" value="1"/>
</dbReference>
<dbReference type="Pfam" id="PF13589">
    <property type="entry name" value="HATPase_c_3"/>
    <property type="match status" value="1"/>
</dbReference>
<dbReference type="Pfam" id="PF00183">
    <property type="entry name" value="HSP90"/>
    <property type="match status" value="1"/>
</dbReference>
<dbReference type="PIRSF" id="PIRSF002583">
    <property type="entry name" value="Hsp90"/>
    <property type="match status" value="1"/>
</dbReference>
<dbReference type="PRINTS" id="PR00775">
    <property type="entry name" value="HEATSHOCK90"/>
</dbReference>
<dbReference type="SMART" id="SM00387">
    <property type="entry name" value="HATPase_c"/>
    <property type="match status" value="1"/>
</dbReference>
<dbReference type="SUPFAM" id="SSF55874">
    <property type="entry name" value="ATPase domain of HSP90 chaperone/DNA topoisomerase II/histidine kinase"/>
    <property type="match status" value="1"/>
</dbReference>
<dbReference type="SUPFAM" id="SSF110942">
    <property type="entry name" value="HSP90 C-terminal domain"/>
    <property type="match status" value="1"/>
</dbReference>
<dbReference type="SUPFAM" id="SSF54211">
    <property type="entry name" value="Ribosomal protein S5 domain 2-like"/>
    <property type="match status" value="1"/>
</dbReference>
<dbReference type="PROSITE" id="PS00298">
    <property type="entry name" value="HSP90"/>
    <property type="match status" value="1"/>
</dbReference>
<name>HTPG_ECO24</name>
<keyword id="KW-0067">ATP-binding</keyword>
<keyword id="KW-0143">Chaperone</keyword>
<keyword id="KW-0963">Cytoplasm</keyword>
<keyword id="KW-0547">Nucleotide-binding</keyword>
<keyword id="KW-1185">Reference proteome</keyword>
<keyword id="KW-0346">Stress response</keyword>
<sequence>MKGQETRGFQSEVKQLLHLMIHSLYSNKEIFLRELISNASDAADKLRFRALSNPDLYEGDGELRVRVSFDKDKRTLTISDNGVGMTRDEVIDHLGTIAKSGTKSFLESLGSDQAKDSQLIGQFGVGFYSAFIVADKVTVRTRAAGEKPENGVFWESAGEGEYTVADITKEDRGTEITLHLREGEDEFLDDWRVRSIISKYSDHIALPVEIEKREEKDGETVISWEKINKAQALWTRNKSEITDEEYKEFYKHIAHDFNDPLTWSHNRVEGKQEYTSLLYIPSQAPWDMWNRDHKHGLKLYVQRVFIMDDAEQFMPNYLRFVRGLIDSSDLPLNVSREILQDSTVTRNLRNALTKRVLQMLEKLAKDDAEKYQTFWQQFGLVLKEGPAEDFANQEAIAKLLRFASTYTDSSAQTVSLEDYVSRMKEGQEKIYYITADSYAAAKSSPHLELLRKKGIEVLLLSDRIDEWMMNYLTEFDGKPFQSVSKVDESLEKLADEVDESAKEAEKALTPFIDRVKALLGERVKDVRLTHRLTDTPAIVSTDADEMSTQMAKLFAAAGQKVPEVKYIFELNPDHVLVKRAADTEDEAKFSEWVELLLDQALLAERGTLEDPNLFIRRMNQLLVS</sequence>
<gene>
    <name evidence="1" type="primary">htpG</name>
    <name type="ordered locus">EcE24377A_0511</name>
</gene>
<feature type="chain" id="PRO_1000060525" description="Chaperone protein HtpG">
    <location>
        <begin position="1"/>
        <end position="624"/>
    </location>
</feature>
<feature type="region of interest" description="A; substrate-binding" evidence="1">
    <location>
        <begin position="1"/>
        <end position="336"/>
    </location>
</feature>
<feature type="region of interest" description="B" evidence="1">
    <location>
        <begin position="337"/>
        <end position="552"/>
    </location>
</feature>
<feature type="region of interest" description="C" evidence="1">
    <location>
        <begin position="553"/>
        <end position="624"/>
    </location>
</feature>
<evidence type="ECO:0000255" key="1">
    <source>
        <dbReference type="HAMAP-Rule" id="MF_00505"/>
    </source>
</evidence>
<accession>A7ZIN3</accession>
<organism>
    <name type="scientific">Escherichia coli O139:H28 (strain E24377A / ETEC)</name>
    <dbReference type="NCBI Taxonomy" id="331111"/>
    <lineage>
        <taxon>Bacteria</taxon>
        <taxon>Pseudomonadati</taxon>
        <taxon>Pseudomonadota</taxon>
        <taxon>Gammaproteobacteria</taxon>
        <taxon>Enterobacterales</taxon>
        <taxon>Enterobacteriaceae</taxon>
        <taxon>Escherichia</taxon>
    </lineage>
</organism>
<proteinExistence type="inferred from homology"/>
<reference key="1">
    <citation type="journal article" date="2008" name="J. Bacteriol.">
        <title>The pangenome structure of Escherichia coli: comparative genomic analysis of E. coli commensal and pathogenic isolates.</title>
        <authorList>
            <person name="Rasko D.A."/>
            <person name="Rosovitz M.J."/>
            <person name="Myers G.S.A."/>
            <person name="Mongodin E.F."/>
            <person name="Fricke W.F."/>
            <person name="Gajer P."/>
            <person name="Crabtree J."/>
            <person name="Sebaihia M."/>
            <person name="Thomson N.R."/>
            <person name="Chaudhuri R."/>
            <person name="Henderson I.R."/>
            <person name="Sperandio V."/>
            <person name="Ravel J."/>
        </authorList>
    </citation>
    <scope>NUCLEOTIDE SEQUENCE [LARGE SCALE GENOMIC DNA]</scope>
    <source>
        <strain>E24377A / ETEC</strain>
    </source>
</reference>
<comment type="function">
    <text evidence="1">Molecular chaperone. Has ATPase activity.</text>
</comment>
<comment type="subunit">
    <text evidence="1">Homodimer.</text>
</comment>
<comment type="subcellular location">
    <subcellularLocation>
        <location evidence="1">Cytoplasm</location>
    </subcellularLocation>
</comment>
<comment type="similarity">
    <text evidence="1">Belongs to the heat shock protein 90 family.</text>
</comment>
<protein>
    <recommendedName>
        <fullName evidence="1">Chaperone protein HtpG</fullName>
    </recommendedName>
    <alternativeName>
        <fullName evidence="1">Heat shock protein HtpG</fullName>
    </alternativeName>
    <alternativeName>
        <fullName evidence="1">High temperature protein G</fullName>
    </alternativeName>
</protein>